<comment type="function">
    <text evidence="1">This is one of the proteins that binds to the 5S RNA in the ribosome where it forms part of the central protuberance.</text>
</comment>
<comment type="subunit">
    <text evidence="1">Part of the 50S ribosomal subunit; part of the 5S rRNA/L5/L18/L25 subcomplex. Contacts the 5S rRNA. Binds to the 5S rRNA independently of L5 and L18.</text>
</comment>
<comment type="similarity">
    <text evidence="1">Belongs to the bacterial ribosomal protein bL25 family. CTC subfamily.</text>
</comment>
<accession>B0BAQ5</accession>
<reference key="1">
    <citation type="journal article" date="2008" name="Genome Res.">
        <title>Chlamydia trachomatis: genome sequence analysis of lymphogranuloma venereum isolates.</title>
        <authorList>
            <person name="Thomson N.R."/>
            <person name="Holden M.T.G."/>
            <person name="Carder C."/>
            <person name="Lennard N."/>
            <person name="Lockey S.J."/>
            <person name="Marsh P."/>
            <person name="Skipp P."/>
            <person name="O'Connor C.D."/>
            <person name="Goodhead I."/>
            <person name="Norbertzcak H."/>
            <person name="Harris B."/>
            <person name="Ormond D."/>
            <person name="Rance R."/>
            <person name="Quail M.A."/>
            <person name="Parkhill J."/>
            <person name="Stephens R.S."/>
            <person name="Clarke I.N."/>
        </authorList>
    </citation>
    <scope>NUCLEOTIDE SEQUENCE [LARGE SCALE GENOMIC DNA]</scope>
    <source>
        <strain>UCH-1/proctitis</strain>
    </source>
</reference>
<keyword id="KW-0687">Ribonucleoprotein</keyword>
<keyword id="KW-0689">Ribosomal protein</keyword>
<keyword id="KW-0694">RNA-binding</keyword>
<keyword id="KW-0699">rRNA-binding</keyword>
<feature type="chain" id="PRO_1000142506" description="Large ribosomal subunit protein bL25">
    <location>
        <begin position="1"/>
        <end position="185"/>
    </location>
</feature>
<gene>
    <name evidence="1" type="primary">rplY</name>
    <name evidence="1" type="synonym">ctc</name>
    <name type="ordered locus">CTLon_0169</name>
</gene>
<organism>
    <name type="scientific">Chlamydia trachomatis serovar L2b (strain UCH-1/proctitis)</name>
    <dbReference type="NCBI Taxonomy" id="471473"/>
    <lineage>
        <taxon>Bacteria</taxon>
        <taxon>Pseudomonadati</taxon>
        <taxon>Chlamydiota</taxon>
        <taxon>Chlamydiia</taxon>
        <taxon>Chlamydiales</taxon>
        <taxon>Chlamydiaceae</taxon>
        <taxon>Chlamydia/Chlamydophila group</taxon>
        <taxon>Chlamydia</taxon>
    </lineage>
</organism>
<proteinExistence type="inferred from homology"/>
<protein>
    <recommendedName>
        <fullName evidence="1">Large ribosomal subunit protein bL25</fullName>
    </recommendedName>
    <alternativeName>
        <fullName evidence="2">50S ribosomal protein L25</fullName>
    </alternativeName>
    <alternativeName>
        <fullName evidence="1">General stress protein CTC</fullName>
    </alternativeName>
</protein>
<dbReference type="EMBL" id="AM884177">
    <property type="protein sequence ID" value="CAP06567.1"/>
    <property type="molecule type" value="Genomic_DNA"/>
</dbReference>
<dbReference type="RefSeq" id="WP_009873414.1">
    <property type="nucleotide sequence ID" value="NC_010280.2"/>
</dbReference>
<dbReference type="SMR" id="B0BAQ5"/>
<dbReference type="KEGG" id="ctl:CTLon_0169"/>
<dbReference type="HOGENOM" id="CLU_075939_2_1_0"/>
<dbReference type="Proteomes" id="UP001154401">
    <property type="component" value="Chromosome"/>
</dbReference>
<dbReference type="GO" id="GO:0022625">
    <property type="term" value="C:cytosolic large ribosomal subunit"/>
    <property type="evidence" value="ECO:0007669"/>
    <property type="project" value="TreeGrafter"/>
</dbReference>
<dbReference type="GO" id="GO:0008097">
    <property type="term" value="F:5S rRNA binding"/>
    <property type="evidence" value="ECO:0007669"/>
    <property type="project" value="InterPro"/>
</dbReference>
<dbReference type="GO" id="GO:0003735">
    <property type="term" value="F:structural constituent of ribosome"/>
    <property type="evidence" value="ECO:0007669"/>
    <property type="project" value="InterPro"/>
</dbReference>
<dbReference type="GO" id="GO:0006412">
    <property type="term" value="P:translation"/>
    <property type="evidence" value="ECO:0007669"/>
    <property type="project" value="UniProtKB-UniRule"/>
</dbReference>
<dbReference type="CDD" id="cd00495">
    <property type="entry name" value="Ribosomal_L25_TL5_CTC"/>
    <property type="match status" value="1"/>
</dbReference>
<dbReference type="FunFam" id="2.170.120.20:FF:000014">
    <property type="entry name" value="50S ribosomal protein L25"/>
    <property type="match status" value="1"/>
</dbReference>
<dbReference type="Gene3D" id="2.170.120.20">
    <property type="entry name" value="Ribosomal protein L25, beta domain"/>
    <property type="match status" value="1"/>
</dbReference>
<dbReference type="Gene3D" id="2.40.240.10">
    <property type="entry name" value="Ribosomal Protein L25, Chain P"/>
    <property type="match status" value="1"/>
</dbReference>
<dbReference type="HAMAP" id="MF_01334">
    <property type="entry name" value="Ribosomal_bL25_CTC"/>
    <property type="match status" value="1"/>
</dbReference>
<dbReference type="InterPro" id="IPR020056">
    <property type="entry name" value="Rbsml_bL25/Gln-tRNA_synth_N"/>
</dbReference>
<dbReference type="InterPro" id="IPR011035">
    <property type="entry name" value="Ribosomal_bL25/Gln-tRNA_synth"/>
</dbReference>
<dbReference type="InterPro" id="IPR020057">
    <property type="entry name" value="Ribosomal_bL25_b-dom"/>
</dbReference>
<dbReference type="InterPro" id="IPR037121">
    <property type="entry name" value="Ribosomal_bL25_C"/>
</dbReference>
<dbReference type="InterPro" id="IPR001021">
    <property type="entry name" value="Ribosomal_bL25_long"/>
</dbReference>
<dbReference type="InterPro" id="IPR029751">
    <property type="entry name" value="Ribosomal_L25_dom"/>
</dbReference>
<dbReference type="InterPro" id="IPR020930">
    <property type="entry name" value="Ribosomal_uL5_bac-type"/>
</dbReference>
<dbReference type="NCBIfam" id="TIGR00731">
    <property type="entry name" value="bL25_bact_ctc"/>
    <property type="match status" value="1"/>
</dbReference>
<dbReference type="NCBIfam" id="NF004129">
    <property type="entry name" value="PRK05618.1-4"/>
    <property type="match status" value="1"/>
</dbReference>
<dbReference type="PANTHER" id="PTHR33284">
    <property type="entry name" value="RIBOSOMAL PROTEIN L25/GLN-TRNA SYNTHETASE, ANTI-CODON-BINDING DOMAIN-CONTAINING PROTEIN"/>
    <property type="match status" value="1"/>
</dbReference>
<dbReference type="PANTHER" id="PTHR33284:SF1">
    <property type="entry name" value="RIBOSOMAL PROTEIN L25_GLN-TRNA SYNTHETASE, ANTI-CODON-BINDING DOMAIN-CONTAINING PROTEIN"/>
    <property type="match status" value="1"/>
</dbReference>
<dbReference type="Pfam" id="PF01386">
    <property type="entry name" value="Ribosomal_L25p"/>
    <property type="match status" value="1"/>
</dbReference>
<dbReference type="Pfam" id="PF14693">
    <property type="entry name" value="Ribosomal_TL5_C"/>
    <property type="match status" value="1"/>
</dbReference>
<dbReference type="SUPFAM" id="SSF50715">
    <property type="entry name" value="Ribosomal protein L25-like"/>
    <property type="match status" value="1"/>
</dbReference>
<sequence length="185" mass="20425">MELVVQSRETDKKSVIKKIRQQGGIPAVLYSGGKSLANIVVDARVFSKFLSTLESGALASTVFTLSYEGREIKALVKDIQYHVTTYDVIHLDFEELVDGRDVRLNVPIRCINTVDCVGVKLGGSLRQVIRCIRVVCKPKDIVPFLELDVQSLGLSQTLKLSDICIPEGIRPVTSLKEVAVTVARR</sequence>
<evidence type="ECO:0000255" key="1">
    <source>
        <dbReference type="HAMAP-Rule" id="MF_01334"/>
    </source>
</evidence>
<evidence type="ECO:0000305" key="2"/>
<name>RL25_CHLTB</name>